<feature type="chain" id="PRO_0000183874" description="Cytochrome c oxidase subunit 3">
    <location>
        <begin position="1"/>
        <end position="269"/>
    </location>
</feature>
<feature type="topological domain" description="Mitochondrial matrix" evidence="3">
    <location>
        <begin position="1"/>
        <end position="22"/>
    </location>
</feature>
<feature type="transmembrane region" description="Helical; Name=1" evidence="3">
    <location>
        <begin position="23"/>
        <end position="41"/>
    </location>
</feature>
<feature type="topological domain" description="Mitochondrial intermembrane" evidence="3">
    <location>
        <begin position="42"/>
        <end position="48"/>
    </location>
</feature>
<feature type="transmembrane region" description="Helical; Name=2" evidence="3">
    <location>
        <begin position="49"/>
        <end position="73"/>
    </location>
</feature>
<feature type="topological domain" description="Mitochondrial matrix" evidence="3">
    <location>
        <begin position="74"/>
        <end position="80"/>
    </location>
</feature>
<feature type="transmembrane region" description="Helical; Name=3" evidence="3">
    <location>
        <begin position="81"/>
        <end position="114"/>
    </location>
</feature>
<feature type="topological domain" description="Mitochondrial intermembrane" evidence="3">
    <location>
        <begin position="115"/>
        <end position="137"/>
    </location>
</feature>
<feature type="transmembrane region" description="Helical; Name=4" evidence="3">
    <location>
        <begin position="138"/>
        <end position="161"/>
    </location>
</feature>
<feature type="topological domain" description="Mitochondrial matrix" evidence="3">
    <location>
        <begin position="162"/>
        <end position="164"/>
    </location>
</feature>
<feature type="transmembrane region" description="Helical; Name=5" evidence="3">
    <location>
        <begin position="165"/>
        <end position="188"/>
    </location>
</feature>
<feature type="topological domain" description="Mitochondrial intermembrane" evidence="3">
    <location>
        <begin position="189"/>
        <end position="201"/>
    </location>
</feature>
<feature type="transmembrane region" description="Helical; Name=6" evidence="3">
    <location>
        <begin position="202"/>
        <end position="230"/>
    </location>
</feature>
<feature type="topological domain" description="Mitochondrial matrix" evidence="3">
    <location>
        <begin position="231"/>
        <end position="248"/>
    </location>
</feature>
<feature type="transmembrane region" description="Helical; Name=7" evidence="3">
    <location>
        <begin position="249"/>
        <end position="265"/>
    </location>
</feature>
<feature type="topological domain" description="Mitochondrial intermembrane" evidence="3">
    <location>
        <begin position="266"/>
        <end position="269"/>
    </location>
</feature>
<feature type="sequence variant" description="In strain: D273-10B/A48." evidence="5 6">
    <original>V</original>
    <variation>T</variation>
    <location>
        <position position="263"/>
    </location>
</feature>
<feature type="turn" evidence="12">
    <location>
        <begin position="2"/>
        <end position="5"/>
    </location>
</feature>
<feature type="helix" evidence="12">
    <location>
        <begin position="6"/>
        <end position="8"/>
    </location>
</feature>
<feature type="strand" evidence="10">
    <location>
        <begin position="11"/>
        <end position="14"/>
    </location>
</feature>
<feature type="helix" evidence="12">
    <location>
        <begin position="22"/>
        <end position="40"/>
    </location>
</feature>
<feature type="turn" evidence="12">
    <location>
        <begin position="41"/>
        <end position="43"/>
    </location>
</feature>
<feature type="strand" evidence="12">
    <location>
        <begin position="44"/>
        <end position="48"/>
    </location>
</feature>
<feature type="helix" evidence="12">
    <location>
        <begin position="49"/>
        <end position="74"/>
    </location>
</feature>
<feature type="helix" evidence="12">
    <location>
        <begin position="81"/>
        <end position="113"/>
    </location>
</feature>
<feature type="helix" evidence="12">
    <location>
        <begin position="118"/>
        <end position="120"/>
    </location>
</feature>
<feature type="strand" evidence="12">
    <location>
        <begin position="122"/>
        <end position="125"/>
    </location>
</feature>
<feature type="strand" evidence="10">
    <location>
        <begin position="127"/>
        <end position="129"/>
    </location>
</feature>
<feature type="strand" evidence="12">
    <location>
        <begin position="134"/>
        <end position="136"/>
    </location>
</feature>
<feature type="helix" evidence="12">
    <location>
        <begin position="137"/>
        <end position="146"/>
    </location>
</feature>
<feature type="helix" evidence="12">
    <location>
        <begin position="148"/>
        <end position="160"/>
    </location>
</feature>
<feature type="helix" evidence="12">
    <location>
        <begin position="164"/>
        <end position="190"/>
    </location>
</feature>
<feature type="strand" evidence="11">
    <location>
        <begin position="196"/>
        <end position="198"/>
    </location>
</feature>
<feature type="helix" evidence="12">
    <location>
        <begin position="199"/>
        <end position="231"/>
    </location>
</feature>
<feature type="strand" evidence="11">
    <location>
        <begin position="237"/>
        <end position="239"/>
    </location>
</feature>
<feature type="helix" evidence="12">
    <location>
        <begin position="241"/>
        <end position="263"/>
    </location>
</feature>
<feature type="turn" evidence="12">
    <location>
        <begin position="264"/>
        <end position="267"/>
    </location>
</feature>
<name>COX3_YEAST</name>
<comment type="function">
    <text evidence="3 9">Component of the cytochrome c oxidase, the last enzyme in the mitochondrial electron transport chain which drives oxidative phosphorylation. The respiratory chain contains 3 multisubunit complexes succinate dehydrogenase (complex II, CII), ubiquinol-cytochrome c oxidoreductase (cytochrome b-c1 complex, complex III, CIII) and cytochrome c oxidase (complex IV, CIV), that cooperate to transfer electrons derived from NADH and succinate to molecular oxygen, creating an electrochemical gradient over the inner membrane that drives transmembrane transport and the ATP synthase. Cytochrome c oxidase is the component of the respiratory chain that catalyzes the reduction of oxygen to water. Electrons originating from reduced cytochrome c in the intermembrane space (IMS) are transferred via the dinuclear copper A center (CU(A)) of COX2 and heme A of COX1 to the active site in COX1, a binuclear center (BNC) formed by heme A3 and copper B (CU(B)). The BNC reduces molecular oxygen to 2 water molecules using 4 electrons from cytochrome c in the IMS and 4 protons from the mitochondrial matrix (Probable). COX3 is a catalytic core subunit (PubMed:30598554).</text>
</comment>
<comment type="catalytic activity">
    <reaction evidence="3">
        <text>4 Fe(II)-[cytochrome c] + O2 + 8 H(+)(in) = 4 Fe(III)-[cytochrome c] + 2 H2O + 4 H(+)(out)</text>
        <dbReference type="Rhea" id="RHEA:11436"/>
        <dbReference type="Rhea" id="RHEA-COMP:10350"/>
        <dbReference type="Rhea" id="RHEA-COMP:14399"/>
        <dbReference type="ChEBI" id="CHEBI:15377"/>
        <dbReference type="ChEBI" id="CHEBI:15378"/>
        <dbReference type="ChEBI" id="CHEBI:15379"/>
        <dbReference type="ChEBI" id="CHEBI:29033"/>
        <dbReference type="ChEBI" id="CHEBI:29034"/>
        <dbReference type="EC" id="7.1.1.9"/>
    </reaction>
    <physiologicalReaction direction="left-to-right" evidence="3">
        <dbReference type="Rhea" id="RHEA:11437"/>
    </physiologicalReaction>
</comment>
<comment type="subunit">
    <text evidence="1 2 3 4 7">Component of the cytochrome c oxidase (complex IV, CIV), a multisubunit enzyme composed of 12 subunits. The complex is composed of a catalytic core of 3 subunits COX1, COX2 and COX3, encoded in the mitochondrial DNA, and 9 supernumerary subunits COX4, COX5A (or COX5B), COX6, COX7, COX8, COX9, COX12, COX13 and COX26, which are encoded in the nuclear genome (PubMed:30598554, PubMed:30598556, PubMed:7851399). The complex exists as a monomer or a dimer and forms supercomplexes (SCs) in the inner mitochondrial membrane with a dimer of ubiquinol-cytochrome c oxidoreductase (cytochrome b-c1 complex, complex III, CIII), resulting in 2 different assemblies (supercomplexes III(2)IV and III(2)IV(2)) (PubMed:10764779, PubMed:10775262, PubMed:30598554, PubMed:30598556).</text>
</comment>
<comment type="subcellular location">
    <subcellularLocation>
        <location evidence="3">Mitochondrion inner membrane</location>
        <topology evidence="3">Multi-pass membrane protein</topology>
    </subcellularLocation>
</comment>
<comment type="PTM">
    <text evidence="7">The N-terminus is blocked.</text>
</comment>
<comment type="similarity">
    <text evidence="8">Belongs to the cytochrome c oxidase subunit 3 family.</text>
</comment>
<organism>
    <name type="scientific">Saccharomyces cerevisiae (strain ATCC 204508 / S288c)</name>
    <name type="common">Baker's yeast</name>
    <dbReference type="NCBI Taxonomy" id="559292"/>
    <lineage>
        <taxon>Eukaryota</taxon>
        <taxon>Fungi</taxon>
        <taxon>Dikarya</taxon>
        <taxon>Ascomycota</taxon>
        <taxon>Saccharomycotina</taxon>
        <taxon>Saccharomycetes</taxon>
        <taxon>Saccharomycetales</taxon>
        <taxon>Saccharomycetaceae</taxon>
        <taxon>Saccharomyces</taxon>
    </lineage>
</organism>
<evidence type="ECO:0000269" key="1">
    <source>
    </source>
</evidence>
<evidence type="ECO:0000269" key="2">
    <source>
    </source>
</evidence>
<evidence type="ECO:0000269" key="3">
    <source>
    </source>
</evidence>
<evidence type="ECO:0000269" key="4">
    <source>
    </source>
</evidence>
<evidence type="ECO:0000269" key="5">
    <source>
    </source>
</evidence>
<evidence type="ECO:0000269" key="6">
    <source>
    </source>
</evidence>
<evidence type="ECO:0000269" key="7">
    <source>
    </source>
</evidence>
<evidence type="ECO:0000305" key="8"/>
<evidence type="ECO:0000305" key="9">
    <source>
    </source>
</evidence>
<evidence type="ECO:0007829" key="10">
    <source>
        <dbReference type="PDB" id="6T0B"/>
    </source>
</evidence>
<evidence type="ECO:0007829" key="11">
    <source>
        <dbReference type="PDB" id="8E7S"/>
    </source>
</evidence>
<evidence type="ECO:0007829" key="12">
    <source>
        <dbReference type="PDB" id="9ETZ"/>
    </source>
</evidence>
<accession>P00420</accession>
<accession>A0A0A7P087</accession>
<accession>Q9ZZV9</accession>
<proteinExistence type="evidence at protein level"/>
<protein>
    <recommendedName>
        <fullName>Cytochrome c oxidase subunit 3</fullName>
        <ecNumber evidence="3">7.1.1.9</ecNumber>
    </recommendedName>
    <alternativeName>
        <fullName>Cytochrome c oxidase polypeptide III</fullName>
    </alternativeName>
</protein>
<gene>
    <name type="primary">COX3</name>
    <name type="synonym">OXI2</name>
    <name type="ordered locus">Q0275</name>
</gene>
<geneLocation type="mitochondrion"/>
<sequence>MTHLERSRHQQHPFHMVMPSPWPIVVSFALLSLALSTALTMHGYIGNMNMVYLALFVLLTSSILWFRDIVAEATYLGDHTMAVRKGINLGFLMFVLSEVLIFAGLFWAYFHSAMSPDVTLGACWPPVGIEAVQPTELPLLNTIILLSSGATVTYSHHALIAGNRNKALSGLLITFWLIVIFVTCQYIEYTNAAFTISDGVYGSVFYAGTGLHFLHMVMLAAMLGVNYWRMRNYHLTAGHHVGYETTIIYTHVLDVIWLFLYVVFYWWGV</sequence>
<dbReference type="EC" id="7.1.1.9" evidence="3"/>
<dbReference type="EMBL" id="AH001284">
    <property type="protein sequence ID" value="AAA32153.2"/>
    <property type="molecule type" value="Genomic_DNA"/>
</dbReference>
<dbReference type="EMBL" id="L36890">
    <property type="protein sequence ID" value="AAA67530.1"/>
    <property type="molecule type" value="Genomic_DNA"/>
</dbReference>
<dbReference type="EMBL" id="KP263414">
    <property type="protein sequence ID" value="AIZ98899.1"/>
    <property type="molecule type" value="Genomic_DNA"/>
</dbReference>
<dbReference type="PIR" id="A00487">
    <property type="entry name" value="OTBY3"/>
</dbReference>
<dbReference type="PIR" id="S78686">
    <property type="entry name" value="S78686"/>
</dbReference>
<dbReference type="RefSeq" id="NP_009328.1">
    <property type="nucleotide sequence ID" value="NC_001224.1"/>
</dbReference>
<dbReference type="RefSeq" id="YP_009144713.1">
    <property type="nucleotide sequence ID" value="NC_027264.1"/>
</dbReference>
<dbReference type="PDB" id="6GIQ">
    <property type="method" value="EM"/>
    <property type="resolution" value="3.23 A"/>
    <property type="chains" value="c=1-269"/>
</dbReference>
<dbReference type="PDB" id="6HU9">
    <property type="method" value="EM"/>
    <property type="resolution" value="3.35 A"/>
    <property type="chains" value="c/o=1-269"/>
</dbReference>
<dbReference type="PDB" id="6T0B">
    <property type="method" value="EM"/>
    <property type="resolution" value="2.80 A"/>
    <property type="chains" value="c/p=1-269"/>
</dbReference>
<dbReference type="PDB" id="6T15">
    <property type="method" value="EM"/>
    <property type="resolution" value="3.29 A"/>
    <property type="chains" value="c=1-269"/>
</dbReference>
<dbReference type="PDB" id="6YMX">
    <property type="method" value="EM"/>
    <property type="resolution" value="3.17 A"/>
    <property type="chains" value="c=2-269"/>
</dbReference>
<dbReference type="PDB" id="6YMY">
    <property type="method" value="EM"/>
    <property type="resolution" value="3.41 A"/>
    <property type="chains" value="c=2-269"/>
</dbReference>
<dbReference type="PDB" id="7Z10">
    <property type="method" value="EM"/>
    <property type="resolution" value="3.87 A"/>
    <property type="chains" value="c=1-269"/>
</dbReference>
<dbReference type="PDB" id="8DH6">
    <property type="method" value="EM"/>
    <property type="resolution" value="2.94 A"/>
    <property type="chains" value="c=1-269"/>
</dbReference>
<dbReference type="PDB" id="8E7S">
    <property type="method" value="EM"/>
    <property type="resolution" value="3.20 A"/>
    <property type="chains" value="O/o=1-269"/>
</dbReference>
<dbReference type="PDB" id="8EC0">
    <property type="method" value="EM"/>
    <property type="resolution" value="3.30 A"/>
    <property type="chains" value="O=1-269"/>
</dbReference>
<dbReference type="PDB" id="9ETZ">
    <property type="method" value="EM"/>
    <property type="resolution" value="2.40 A"/>
    <property type="chains" value="c=1-269"/>
</dbReference>
<dbReference type="PDBsum" id="6GIQ"/>
<dbReference type="PDBsum" id="6HU9"/>
<dbReference type="PDBsum" id="6T0B"/>
<dbReference type="PDBsum" id="6T15"/>
<dbReference type="PDBsum" id="6YMX"/>
<dbReference type="PDBsum" id="6YMY"/>
<dbReference type="PDBsum" id="7Z10"/>
<dbReference type="PDBsum" id="8DH6"/>
<dbReference type="PDBsum" id="8E7S"/>
<dbReference type="PDBsum" id="8EC0"/>
<dbReference type="PDBsum" id="9ETZ"/>
<dbReference type="EMDB" id="EMD-10318"/>
<dbReference type="EMDB" id="EMD-10334"/>
<dbReference type="EMDB" id="EMD-10335"/>
<dbReference type="EMDB" id="EMD-10340"/>
<dbReference type="EMDB" id="EMD-10375"/>
<dbReference type="EMDB" id="EMD-10376"/>
<dbReference type="EMDB" id="EMD-10847"/>
<dbReference type="EMDB" id="EMD-10848"/>
<dbReference type="EMDB" id="EMD-14436"/>
<dbReference type="EMDB" id="EMD-19963"/>
<dbReference type="EMDB" id="EMD-27430"/>
<dbReference type="EMDB" id="EMD-27940"/>
<dbReference type="EMDB" id="EMD-28011"/>
<dbReference type="SMR" id="P00420"/>
<dbReference type="BioGRID" id="34817">
    <property type="interactions" value="39"/>
</dbReference>
<dbReference type="ComplexPortal" id="CPX-1721">
    <property type="entry name" value="Mitochondrial respiratory chain complex IV, COX5A variant"/>
</dbReference>
<dbReference type="ComplexPortal" id="CPX-1722">
    <property type="entry name" value="Mitochondrial respiratory chain complex IV, COX5B variant"/>
</dbReference>
<dbReference type="DIP" id="DIP-8133N"/>
<dbReference type="FunCoup" id="P00420">
    <property type="interactions" value="296"/>
</dbReference>
<dbReference type="IntAct" id="P00420">
    <property type="interactions" value="2"/>
</dbReference>
<dbReference type="MINT" id="P00420"/>
<dbReference type="STRING" id="4932.Q0275"/>
<dbReference type="TCDB" id="3.D.4.8.1">
    <property type="family name" value="the proton-translocating cytochrome oxidase (cox) superfamily"/>
</dbReference>
<dbReference type="PaxDb" id="4932-Q0275"/>
<dbReference type="PeptideAtlas" id="P00420"/>
<dbReference type="EnsemblFungi" id="Q0275_mRNA">
    <property type="protein sequence ID" value="Q0275"/>
    <property type="gene ID" value="Q0275"/>
</dbReference>
<dbReference type="GeneID" id="24573142"/>
<dbReference type="GeneID" id="854627"/>
<dbReference type="KEGG" id="sce:Q0275"/>
<dbReference type="AGR" id="SGD:S000007283"/>
<dbReference type="SGD" id="S000007283">
    <property type="gene designation" value="COX3"/>
</dbReference>
<dbReference type="VEuPathDB" id="FungiDB:Q0275"/>
<dbReference type="eggNOG" id="KOG4664">
    <property type="taxonomic scope" value="Eukaryota"/>
</dbReference>
<dbReference type="GeneTree" id="ENSGT00390000013064"/>
<dbReference type="HOGENOM" id="CLU_044071_0_0_1"/>
<dbReference type="InParanoid" id="P00420"/>
<dbReference type="OMA" id="SIYWWGS"/>
<dbReference type="OrthoDB" id="10050457at2759"/>
<dbReference type="BioCyc" id="MetaCyc:Q0275-MONOMER"/>
<dbReference type="BioCyc" id="YEAST:Q0275-MONOMER"/>
<dbReference type="BioGRID-ORCS" id="854627">
    <property type="hits" value="0 hits in 10 CRISPR screens"/>
</dbReference>
<dbReference type="PRO" id="PR:P00420"/>
<dbReference type="Proteomes" id="UP000002311">
    <property type="component" value="Mitochondrion"/>
</dbReference>
<dbReference type="RNAct" id="P00420">
    <property type="molecule type" value="protein"/>
</dbReference>
<dbReference type="GO" id="GO:0005743">
    <property type="term" value="C:mitochondrial inner membrane"/>
    <property type="evidence" value="ECO:0007669"/>
    <property type="project" value="UniProtKB-SubCell"/>
</dbReference>
<dbReference type="GO" id="GO:0031966">
    <property type="term" value="C:mitochondrial membrane"/>
    <property type="evidence" value="ECO:0000314"/>
    <property type="project" value="ComplexPortal"/>
</dbReference>
<dbReference type="GO" id="GO:0005739">
    <property type="term" value="C:mitochondrion"/>
    <property type="evidence" value="ECO:0000314"/>
    <property type="project" value="SGD"/>
</dbReference>
<dbReference type="GO" id="GO:0045277">
    <property type="term" value="C:respiratory chain complex IV"/>
    <property type="evidence" value="ECO:0000314"/>
    <property type="project" value="SGD"/>
</dbReference>
<dbReference type="GO" id="GO:0004129">
    <property type="term" value="F:cytochrome-c oxidase activity"/>
    <property type="evidence" value="ECO:0007669"/>
    <property type="project" value="UniProtKB-EC"/>
</dbReference>
<dbReference type="GO" id="GO:0048039">
    <property type="term" value="F:ubiquinone binding"/>
    <property type="evidence" value="ECO:0000314"/>
    <property type="project" value="SGD"/>
</dbReference>
<dbReference type="GO" id="GO:0009060">
    <property type="term" value="P:aerobic respiration"/>
    <property type="evidence" value="ECO:0000315"/>
    <property type="project" value="SGD"/>
</dbReference>
<dbReference type="GO" id="GO:0045333">
    <property type="term" value="P:cellular respiration"/>
    <property type="evidence" value="ECO:0000314"/>
    <property type="project" value="ComplexPortal"/>
</dbReference>
<dbReference type="GO" id="GO:0006123">
    <property type="term" value="P:mitochondrial electron transport, cytochrome c to oxygen"/>
    <property type="evidence" value="ECO:0000314"/>
    <property type="project" value="SGD"/>
</dbReference>
<dbReference type="CDD" id="cd01665">
    <property type="entry name" value="Cyt_c_Oxidase_III"/>
    <property type="match status" value="1"/>
</dbReference>
<dbReference type="FunFam" id="1.10.287.70:FF:000082">
    <property type="entry name" value="Cytochrome c oxidase subunit 3"/>
    <property type="match status" value="1"/>
</dbReference>
<dbReference type="FunFam" id="1.20.120.80:FF:000002">
    <property type="entry name" value="Cytochrome c oxidase subunit 3"/>
    <property type="match status" value="1"/>
</dbReference>
<dbReference type="Gene3D" id="1.10.287.70">
    <property type="match status" value="1"/>
</dbReference>
<dbReference type="Gene3D" id="1.20.120.80">
    <property type="entry name" value="Cytochrome c oxidase, subunit III, four-helix bundle"/>
    <property type="match status" value="1"/>
</dbReference>
<dbReference type="InterPro" id="IPR024791">
    <property type="entry name" value="Cyt_c/ubiquinol_Oxase_su3"/>
</dbReference>
<dbReference type="InterPro" id="IPR033945">
    <property type="entry name" value="Cyt_c_oxase_su3_dom"/>
</dbReference>
<dbReference type="InterPro" id="IPR000298">
    <property type="entry name" value="Cyt_c_oxidase-like_su3"/>
</dbReference>
<dbReference type="InterPro" id="IPR035973">
    <property type="entry name" value="Cyt_c_oxidase_su3-like_sf"/>
</dbReference>
<dbReference type="InterPro" id="IPR013833">
    <property type="entry name" value="Cyt_c_oxidase_su3_a-hlx"/>
</dbReference>
<dbReference type="PANTHER" id="PTHR11403:SF7">
    <property type="entry name" value="CYTOCHROME C OXIDASE SUBUNIT 3"/>
    <property type="match status" value="1"/>
</dbReference>
<dbReference type="PANTHER" id="PTHR11403">
    <property type="entry name" value="CYTOCHROME C OXIDASE SUBUNIT III"/>
    <property type="match status" value="1"/>
</dbReference>
<dbReference type="Pfam" id="PF00510">
    <property type="entry name" value="COX3"/>
    <property type="match status" value="1"/>
</dbReference>
<dbReference type="SUPFAM" id="SSF81452">
    <property type="entry name" value="Cytochrome c oxidase subunit III-like"/>
    <property type="match status" value="1"/>
</dbReference>
<dbReference type="PROSITE" id="PS50253">
    <property type="entry name" value="COX3"/>
    <property type="match status" value="1"/>
</dbReference>
<keyword id="KW-0002">3D-structure</keyword>
<keyword id="KW-0472">Membrane</keyword>
<keyword id="KW-0496">Mitochondrion</keyword>
<keyword id="KW-0999">Mitochondrion inner membrane</keyword>
<keyword id="KW-1185">Reference proteome</keyword>
<keyword id="KW-1278">Translocase</keyword>
<keyword id="KW-0812">Transmembrane</keyword>
<keyword id="KW-1133">Transmembrane helix</keyword>
<reference key="1">
    <citation type="journal article" date="1980" name="J. Biol. Chem.">
        <title>Assembly of the mitochondrial membrane system. Sequence of the oxi 2 gene of yeast mitochondrial DNA.</title>
        <authorList>
            <person name="Thalenfeld B.E."/>
            <person name="Tzagoloff A."/>
        </authorList>
    </citation>
    <scope>NUCLEOTIDE SEQUENCE [GENOMIC DNA]</scope>
    <source>
        <strain>D273-10B/A48</strain>
    </source>
</reference>
<reference key="2">
    <citation type="journal article" date="1986" name="Gene">
        <title>The primary structure of the mitochondrial genome of Saccharomyces cerevisiae -- a review.</title>
        <authorList>
            <person name="de Zamaroczy M."/>
            <person name="Bernardi G."/>
        </authorList>
    </citation>
    <scope>NUCLEOTIDE SEQUENCE [GENOMIC DNA]</scope>
</reference>
<reference key="3">
    <citation type="journal article" date="1998" name="FEBS Lett.">
        <title>The complete sequence of the mitochondrial genome of Saccharomyces cerevisiae.</title>
        <authorList>
            <person name="Foury F."/>
            <person name="Roganti T."/>
            <person name="Lecrenier N."/>
            <person name="Purnelle B."/>
        </authorList>
    </citation>
    <scope>NUCLEOTIDE SEQUENCE [LARGE SCALE GENOMIC DNA]</scope>
    <source>
        <strain>ATCC 96604 / S288c / FY1679</strain>
    </source>
</reference>
<reference key="4">
    <citation type="journal article" date="2014" name="G3 (Bethesda)">
        <title>The reference genome sequence of Saccharomyces cerevisiae: Then and now.</title>
        <authorList>
            <person name="Engel S.R."/>
            <person name="Dietrich F.S."/>
            <person name="Fisk D.G."/>
            <person name="Binkley G."/>
            <person name="Balakrishnan R."/>
            <person name="Costanzo M.C."/>
            <person name="Dwight S.S."/>
            <person name="Hitz B.C."/>
            <person name="Karra K."/>
            <person name="Nash R.S."/>
            <person name="Weng S."/>
            <person name="Wong E.D."/>
            <person name="Lloyd P."/>
            <person name="Skrzypek M.S."/>
            <person name="Miyasato S.R."/>
            <person name="Simison M."/>
            <person name="Cherry J.M."/>
        </authorList>
    </citation>
    <scope>GENOME REANNOTATION</scope>
    <source>
        <strain>ATCC 96604 / S288c / FY1679</strain>
    </source>
</reference>
<reference key="5">
    <citation type="journal article" date="1992" name="J. Biol. Chem.">
        <title>Purification of yeast cytochrome c oxidase with a subunit composition resembling the mammalian enzyme.</title>
        <authorList>
            <person name="Taanman J.-W."/>
            <person name="Capaldi R.A."/>
        </authorList>
    </citation>
    <scope>COMPOSITION OF THE CYTOCHROME C OXIDASE COMPLEX</scope>
</reference>
<reference key="6">
    <citation type="journal article" date="1995" name="Eur. J. Biochem.">
        <title>Kinetic properties and ligand binding of the eleven-subunit cytochrome-c oxidase from Saccharomyces cerevisiae isolated with a novel large-scale purification method.</title>
        <authorList>
            <person name="Geier B.M."/>
            <person name="Schagger H."/>
            <person name="Ortwein C."/>
            <person name="Link T.A."/>
            <person name="Hagen W.R."/>
            <person name="Brandt U."/>
            <person name="Von Jagow G."/>
        </authorList>
    </citation>
    <scope>COMPOSITION OF THE CYTOCHROME C OXIDASE COMPLEX</scope>
    <scope>BLOCKED N-TERMINUS</scope>
</reference>
<reference key="7">
    <citation type="journal article" date="2000" name="EMBO J.">
        <title>Supercomplexes in the respiratory chains of yeast and mammalian mitochondria.</title>
        <authorList>
            <person name="Schaegger H."/>
            <person name="Pfeiffer K."/>
        </authorList>
    </citation>
    <scope>FORMATION OF CYTOCHROME BC1-CYTOCHROME C OXIDASE SUPERCOMPLEX</scope>
</reference>
<reference key="8">
    <citation type="journal article" date="2000" name="J. Biol. Chem.">
        <title>The cytochrome bc1 and cytochrome c oxidase complexes associate to form a single supracomplex in yeast mitochondria.</title>
        <authorList>
            <person name="Cruciat C.M."/>
            <person name="Brunner S."/>
            <person name="Baumann F."/>
            <person name="Neupert W."/>
            <person name="Stuart R.A."/>
        </authorList>
    </citation>
    <scope>FORMATION OF CYTOCHROME BC1-CYTOCHROME C OXIDASE SUPERCOMPLEX</scope>
</reference>
<reference key="9">
    <citation type="journal article" date="2019" name="Nat. Struct. Mol. Biol.">
        <title>Cryo-EM structure of the yeast respiratory supercomplex.</title>
        <authorList>
            <person name="Rathore S."/>
            <person name="Berndtsson J."/>
            <person name="Marin-Buera L."/>
            <person name="Conrad J."/>
            <person name="Carroni M."/>
            <person name="Brzezinski P."/>
            <person name="Ott M."/>
        </authorList>
    </citation>
    <scope>STRUCTURE BY ELECTRON MICROSCOPY (3.23 ANGSTROMS)</scope>
</reference>
<reference key="10">
    <citation type="journal article" date="2019" name="Nat. Struct. Mol. Biol.">
        <title>Structure of yeast cytochrome c oxidase in a supercomplex with cytochrome bc1.</title>
        <authorList>
            <person name="Hartley A.M."/>
            <person name="Lukoyanova N."/>
            <person name="Zhang Y."/>
            <person name="Cabrera-Orefice A."/>
            <person name="Arnold S."/>
            <person name="Meunier B."/>
            <person name="Pinotsis N."/>
            <person name="Marechal A."/>
        </authorList>
    </citation>
    <scope>STRUCTURE BY ELECTRON MICROSCOPY (3.35 ANGSTROMS)</scope>
    <scope>FUNCTION</scope>
    <scope>CATALYTIC ACTIVITY</scope>
</reference>